<name>LDH_CLOP1</name>
<feature type="chain" id="PRO_1000026501" description="L-lactate dehydrogenase">
    <location>
        <begin position="1"/>
        <end position="317"/>
    </location>
</feature>
<feature type="active site" description="Proton acceptor" evidence="1">
    <location>
        <position position="178"/>
    </location>
</feature>
<feature type="binding site" evidence="1">
    <location>
        <position position="17"/>
    </location>
    <ligand>
        <name>NAD(+)</name>
        <dbReference type="ChEBI" id="CHEBI:57540"/>
    </ligand>
</feature>
<feature type="binding site" evidence="1">
    <location>
        <position position="38"/>
    </location>
    <ligand>
        <name>NAD(+)</name>
        <dbReference type="ChEBI" id="CHEBI:57540"/>
    </ligand>
</feature>
<feature type="binding site" evidence="1">
    <location>
        <position position="43"/>
    </location>
    <ligand>
        <name>NAD(+)</name>
        <dbReference type="ChEBI" id="CHEBI:57540"/>
    </ligand>
</feature>
<feature type="binding site" evidence="1">
    <location>
        <position position="68"/>
    </location>
    <ligand>
        <name>NAD(+)</name>
        <dbReference type="ChEBI" id="CHEBI:57540"/>
    </ligand>
</feature>
<feature type="binding site" evidence="1">
    <location>
        <begin position="82"/>
        <end position="83"/>
    </location>
    <ligand>
        <name>NAD(+)</name>
        <dbReference type="ChEBI" id="CHEBI:57540"/>
    </ligand>
</feature>
<feature type="binding site" evidence="1">
    <location>
        <position position="91"/>
    </location>
    <ligand>
        <name>substrate</name>
    </ligand>
</feature>
<feature type="binding site" evidence="1">
    <location>
        <position position="104"/>
    </location>
    <ligand>
        <name>NAD(+)</name>
        <dbReference type="ChEBI" id="CHEBI:57540"/>
    </ligand>
</feature>
<feature type="binding site" evidence="1">
    <location>
        <begin position="121"/>
        <end position="123"/>
    </location>
    <ligand>
        <name>NAD(+)</name>
        <dbReference type="ChEBI" id="CHEBI:57540"/>
    </ligand>
</feature>
<feature type="binding site" evidence="1">
    <location>
        <begin position="123"/>
        <end position="126"/>
    </location>
    <ligand>
        <name>substrate</name>
    </ligand>
</feature>
<feature type="binding site" evidence="1">
    <location>
        <position position="146"/>
    </location>
    <ligand>
        <name>NAD(+)</name>
        <dbReference type="ChEBI" id="CHEBI:57540"/>
    </ligand>
</feature>
<feature type="binding site" evidence="1">
    <location>
        <begin position="151"/>
        <end position="154"/>
    </location>
    <ligand>
        <name>substrate</name>
    </ligand>
</feature>
<feature type="binding site" evidence="1">
    <location>
        <position position="156"/>
    </location>
    <ligand>
        <name>beta-D-fructose 1,6-bisphosphate</name>
        <dbReference type="ChEBI" id="CHEBI:32966"/>
        <note>allosteric activator</note>
    </ligand>
</feature>
<feature type="binding site" evidence="1">
    <location>
        <position position="171"/>
    </location>
    <ligand>
        <name>beta-D-fructose 1,6-bisphosphate</name>
        <dbReference type="ChEBI" id="CHEBI:32966"/>
        <note>allosteric activator</note>
    </ligand>
</feature>
<feature type="binding site" evidence="1">
    <location>
        <position position="233"/>
    </location>
    <ligand>
        <name>substrate</name>
    </ligand>
</feature>
<feature type="modified residue" description="Phosphotyrosine" evidence="1">
    <location>
        <position position="224"/>
    </location>
</feature>
<proteinExistence type="inferred from homology"/>
<reference key="1">
    <citation type="journal article" date="2006" name="Genome Res.">
        <title>Skewed genomic variability in strains of the toxigenic bacterial pathogen, Clostridium perfringens.</title>
        <authorList>
            <person name="Myers G.S.A."/>
            <person name="Rasko D.A."/>
            <person name="Cheung J.K."/>
            <person name="Ravel J."/>
            <person name="Seshadri R."/>
            <person name="DeBoy R.T."/>
            <person name="Ren Q."/>
            <person name="Varga J."/>
            <person name="Awad M.M."/>
            <person name="Brinkac L.M."/>
            <person name="Daugherty S.C."/>
            <person name="Haft D.H."/>
            <person name="Dodson R.J."/>
            <person name="Madupu R."/>
            <person name="Nelson W.C."/>
            <person name="Rosovitz M.J."/>
            <person name="Sullivan S.A."/>
            <person name="Khouri H."/>
            <person name="Dimitrov G.I."/>
            <person name="Watkins K.L."/>
            <person name="Mulligan S."/>
            <person name="Benton J."/>
            <person name="Radune D."/>
            <person name="Fisher D.J."/>
            <person name="Atkins H.S."/>
            <person name="Hiscox T."/>
            <person name="Jost B.H."/>
            <person name="Billington S.J."/>
            <person name="Songer J.G."/>
            <person name="McClane B.A."/>
            <person name="Titball R.W."/>
            <person name="Rood J.I."/>
            <person name="Melville S.B."/>
            <person name="Paulsen I.T."/>
        </authorList>
    </citation>
    <scope>NUCLEOTIDE SEQUENCE [LARGE SCALE GENOMIC DNA]</scope>
    <source>
        <strain>ATCC 13124 / DSM 756 / JCM 1290 / NCIMB 6125 / NCTC 8237 / S 107 / Type A</strain>
    </source>
</reference>
<dbReference type="EC" id="1.1.1.27" evidence="1"/>
<dbReference type="EMBL" id="CP000246">
    <property type="protein sequence ID" value="ABG84272.1"/>
    <property type="molecule type" value="Genomic_DNA"/>
</dbReference>
<dbReference type="RefSeq" id="WP_003448546.1">
    <property type="nucleotide sequence ID" value="NC_008261.1"/>
</dbReference>
<dbReference type="SMR" id="Q0TUX8"/>
<dbReference type="STRING" id="195103.CPF_0098"/>
<dbReference type="PaxDb" id="195103-CPF_0098"/>
<dbReference type="KEGG" id="cpf:CPF_0098"/>
<dbReference type="eggNOG" id="COG0039">
    <property type="taxonomic scope" value="Bacteria"/>
</dbReference>
<dbReference type="HOGENOM" id="CLU_045401_1_1_9"/>
<dbReference type="UniPathway" id="UPA00554">
    <property type="reaction ID" value="UER00611"/>
</dbReference>
<dbReference type="Proteomes" id="UP000001823">
    <property type="component" value="Chromosome"/>
</dbReference>
<dbReference type="GO" id="GO:0005737">
    <property type="term" value="C:cytoplasm"/>
    <property type="evidence" value="ECO:0007669"/>
    <property type="project" value="UniProtKB-SubCell"/>
</dbReference>
<dbReference type="GO" id="GO:0004459">
    <property type="term" value="F:L-lactate dehydrogenase activity"/>
    <property type="evidence" value="ECO:0007669"/>
    <property type="project" value="UniProtKB-UniRule"/>
</dbReference>
<dbReference type="GO" id="GO:0006096">
    <property type="term" value="P:glycolytic process"/>
    <property type="evidence" value="ECO:0007669"/>
    <property type="project" value="UniProtKB-UniRule"/>
</dbReference>
<dbReference type="GO" id="GO:0006089">
    <property type="term" value="P:lactate metabolic process"/>
    <property type="evidence" value="ECO:0007669"/>
    <property type="project" value="TreeGrafter"/>
</dbReference>
<dbReference type="CDD" id="cd05292">
    <property type="entry name" value="LDH_2"/>
    <property type="match status" value="1"/>
</dbReference>
<dbReference type="FunFam" id="3.40.50.720:FF:000018">
    <property type="entry name" value="Malate dehydrogenase"/>
    <property type="match status" value="1"/>
</dbReference>
<dbReference type="Gene3D" id="3.90.110.10">
    <property type="entry name" value="Lactate dehydrogenase/glycoside hydrolase, family 4, C-terminal"/>
    <property type="match status" value="1"/>
</dbReference>
<dbReference type="Gene3D" id="3.40.50.720">
    <property type="entry name" value="NAD(P)-binding Rossmann-like Domain"/>
    <property type="match status" value="1"/>
</dbReference>
<dbReference type="HAMAP" id="MF_00488">
    <property type="entry name" value="Lactate_dehydrog"/>
    <property type="match status" value="1"/>
</dbReference>
<dbReference type="InterPro" id="IPR001557">
    <property type="entry name" value="L-lactate/malate_DH"/>
</dbReference>
<dbReference type="InterPro" id="IPR011304">
    <property type="entry name" value="L-lactate_DH"/>
</dbReference>
<dbReference type="InterPro" id="IPR018177">
    <property type="entry name" value="L-lactate_DH_AS"/>
</dbReference>
<dbReference type="InterPro" id="IPR022383">
    <property type="entry name" value="Lactate/malate_DH_C"/>
</dbReference>
<dbReference type="InterPro" id="IPR001236">
    <property type="entry name" value="Lactate/malate_DH_N"/>
</dbReference>
<dbReference type="InterPro" id="IPR015955">
    <property type="entry name" value="Lactate_DH/Glyco_Ohase_4_C"/>
</dbReference>
<dbReference type="InterPro" id="IPR036291">
    <property type="entry name" value="NAD(P)-bd_dom_sf"/>
</dbReference>
<dbReference type="NCBIfam" id="TIGR01771">
    <property type="entry name" value="L-LDH-NAD"/>
    <property type="match status" value="1"/>
</dbReference>
<dbReference type="NCBIfam" id="NF000824">
    <property type="entry name" value="PRK00066.1"/>
    <property type="match status" value="1"/>
</dbReference>
<dbReference type="NCBIfam" id="NF004863">
    <property type="entry name" value="PRK06223.1"/>
    <property type="match status" value="1"/>
</dbReference>
<dbReference type="PANTHER" id="PTHR43128">
    <property type="entry name" value="L-2-HYDROXYCARBOXYLATE DEHYDROGENASE (NAD(P)(+))"/>
    <property type="match status" value="1"/>
</dbReference>
<dbReference type="PANTHER" id="PTHR43128:SF16">
    <property type="entry name" value="L-LACTATE DEHYDROGENASE"/>
    <property type="match status" value="1"/>
</dbReference>
<dbReference type="Pfam" id="PF02866">
    <property type="entry name" value="Ldh_1_C"/>
    <property type="match status" value="1"/>
</dbReference>
<dbReference type="Pfam" id="PF00056">
    <property type="entry name" value="Ldh_1_N"/>
    <property type="match status" value="1"/>
</dbReference>
<dbReference type="PIRSF" id="PIRSF000102">
    <property type="entry name" value="Lac_mal_DH"/>
    <property type="match status" value="1"/>
</dbReference>
<dbReference type="PRINTS" id="PR00086">
    <property type="entry name" value="LLDHDRGNASE"/>
</dbReference>
<dbReference type="SUPFAM" id="SSF56327">
    <property type="entry name" value="LDH C-terminal domain-like"/>
    <property type="match status" value="1"/>
</dbReference>
<dbReference type="SUPFAM" id="SSF51735">
    <property type="entry name" value="NAD(P)-binding Rossmann-fold domains"/>
    <property type="match status" value="1"/>
</dbReference>
<dbReference type="PROSITE" id="PS00064">
    <property type="entry name" value="L_LDH"/>
    <property type="match status" value="1"/>
</dbReference>
<accession>Q0TUX8</accession>
<comment type="function">
    <text evidence="1">Catalyzes the conversion of lactate to pyruvate.</text>
</comment>
<comment type="catalytic activity">
    <reaction evidence="1">
        <text>(S)-lactate + NAD(+) = pyruvate + NADH + H(+)</text>
        <dbReference type="Rhea" id="RHEA:23444"/>
        <dbReference type="ChEBI" id="CHEBI:15361"/>
        <dbReference type="ChEBI" id="CHEBI:15378"/>
        <dbReference type="ChEBI" id="CHEBI:16651"/>
        <dbReference type="ChEBI" id="CHEBI:57540"/>
        <dbReference type="ChEBI" id="CHEBI:57945"/>
        <dbReference type="EC" id="1.1.1.27"/>
    </reaction>
</comment>
<comment type="activity regulation">
    <text evidence="1">Allosterically activated by fructose 1,6-bisphosphate (FBP).</text>
</comment>
<comment type="pathway">
    <text evidence="1">Fermentation; pyruvate fermentation to lactate; (S)-lactate from pyruvate: step 1/1.</text>
</comment>
<comment type="subunit">
    <text evidence="1">Homotetramer.</text>
</comment>
<comment type="subcellular location">
    <subcellularLocation>
        <location evidence="1">Cytoplasm</location>
    </subcellularLocation>
</comment>
<comment type="similarity">
    <text evidence="1">Belongs to the LDH/MDH superfamily. LDH family.</text>
</comment>
<protein>
    <recommendedName>
        <fullName evidence="1">L-lactate dehydrogenase</fullName>
        <shortName evidence="1">L-LDH</shortName>
        <ecNumber evidence="1">1.1.1.27</ecNumber>
    </recommendedName>
</protein>
<gene>
    <name evidence="1" type="primary">ldh</name>
    <name type="ordered locus">CPF_0098</name>
</gene>
<evidence type="ECO:0000255" key="1">
    <source>
        <dbReference type="HAMAP-Rule" id="MF_00488"/>
    </source>
</evidence>
<sequence>MIREKTNKISIIGAGFVGSTTAFALMQDGLASEIVIVDINKDKAHAEAMDLAQGAAFVKSVDIKSGDYADTKDSDIVIITAGVGPKPGETRLDIINKNLKIFQSIVPEVVKYSPNSILLVVSNPVDILTYITYKLSGFPKERVIGSGTVLDTSRLKYMLSEHFDIDARNVHTYIIGEHGDSEITAWSLTNIAGANVEEYCKTVCANCDGSFKKELPEKVKNAAYEIINSKGYTNYAVALAVTRIVEAILRDENAILTVSSLFEGQYGIDNVYLAMPTIVDRSGARQILDVPISNEEKENLIKSAEILKGHIANSELD</sequence>
<organism>
    <name type="scientific">Clostridium perfringens (strain ATCC 13124 / DSM 756 / JCM 1290 / NCIMB 6125 / NCTC 8237 / Type A)</name>
    <dbReference type="NCBI Taxonomy" id="195103"/>
    <lineage>
        <taxon>Bacteria</taxon>
        <taxon>Bacillati</taxon>
        <taxon>Bacillota</taxon>
        <taxon>Clostridia</taxon>
        <taxon>Eubacteriales</taxon>
        <taxon>Clostridiaceae</taxon>
        <taxon>Clostridium</taxon>
    </lineage>
</organism>
<keyword id="KW-0021">Allosteric enzyme</keyword>
<keyword id="KW-0963">Cytoplasm</keyword>
<keyword id="KW-0520">NAD</keyword>
<keyword id="KW-0560">Oxidoreductase</keyword>
<keyword id="KW-0597">Phosphoprotein</keyword>